<protein>
    <recommendedName>
        <fullName evidence="1">NAD(P)H-quinone oxidoreductase subunit K, chloroplastic</fullName>
        <ecNumber evidence="1">7.1.1.-</ecNumber>
    </recommendedName>
    <alternativeName>
        <fullName evidence="1">NAD(P)H dehydrogenase subunit K</fullName>
    </alternativeName>
    <alternativeName>
        <fullName evidence="1">NADH-plastoquinone oxidoreductase subunit K</fullName>
    </alternativeName>
</protein>
<gene>
    <name evidence="1" type="primary">ndhK</name>
</gene>
<geneLocation type="chloroplast"/>
<comment type="function">
    <text evidence="1">NDH shuttles electrons from NAD(P)H:plastoquinone, via FMN and iron-sulfur (Fe-S) centers, to quinones in the photosynthetic chain and possibly in a chloroplast respiratory chain. The immediate electron acceptor for the enzyme in this species is believed to be plastoquinone. Couples the redox reaction to proton translocation, and thus conserves the redox energy in a proton gradient.</text>
</comment>
<comment type="catalytic activity">
    <reaction evidence="1">
        <text>a plastoquinone + NADH + (n+1) H(+)(in) = a plastoquinol + NAD(+) + n H(+)(out)</text>
        <dbReference type="Rhea" id="RHEA:42608"/>
        <dbReference type="Rhea" id="RHEA-COMP:9561"/>
        <dbReference type="Rhea" id="RHEA-COMP:9562"/>
        <dbReference type="ChEBI" id="CHEBI:15378"/>
        <dbReference type="ChEBI" id="CHEBI:17757"/>
        <dbReference type="ChEBI" id="CHEBI:57540"/>
        <dbReference type="ChEBI" id="CHEBI:57945"/>
        <dbReference type="ChEBI" id="CHEBI:62192"/>
    </reaction>
</comment>
<comment type="catalytic activity">
    <reaction evidence="1">
        <text>a plastoquinone + NADPH + (n+1) H(+)(in) = a plastoquinol + NADP(+) + n H(+)(out)</text>
        <dbReference type="Rhea" id="RHEA:42612"/>
        <dbReference type="Rhea" id="RHEA-COMP:9561"/>
        <dbReference type="Rhea" id="RHEA-COMP:9562"/>
        <dbReference type="ChEBI" id="CHEBI:15378"/>
        <dbReference type="ChEBI" id="CHEBI:17757"/>
        <dbReference type="ChEBI" id="CHEBI:57783"/>
        <dbReference type="ChEBI" id="CHEBI:58349"/>
        <dbReference type="ChEBI" id="CHEBI:62192"/>
    </reaction>
</comment>
<comment type="cofactor">
    <cofactor evidence="1">
        <name>[4Fe-4S] cluster</name>
        <dbReference type="ChEBI" id="CHEBI:49883"/>
    </cofactor>
    <text evidence="1">Binds 1 [4Fe-4S] cluster.</text>
</comment>
<comment type="subunit">
    <text evidence="1">NDH is composed of at least 16 different subunits, 5 of which are encoded in the nucleus.</text>
</comment>
<comment type="subcellular location">
    <subcellularLocation>
        <location evidence="1">Plastid</location>
        <location evidence="1">Chloroplast thylakoid membrane</location>
        <topology evidence="1">Peripheral membrane protein</topology>
        <orientation evidence="1">Stromal side</orientation>
    </subcellularLocation>
</comment>
<comment type="similarity">
    <text evidence="1">Belongs to the complex I 20 kDa subunit family.</text>
</comment>
<comment type="sequence caution" evidence="2">
    <conflict type="erroneous initiation">
        <sequence resource="EMBL-CDS" id="BAD26782"/>
    </conflict>
</comment>
<name>NDHK_ORYNI</name>
<reference key="1">
    <citation type="journal article" date="2004" name="Gene">
        <title>The complete nucleotide sequence of wild rice (Oryza nivara) chloroplast genome: first genome wide comparative sequence analysis of wild and cultivated rice.</title>
        <authorList>
            <person name="Masood M.S."/>
            <person name="Nishikawa T."/>
            <person name="Fukuoka S."/>
            <person name="Njenga P.K."/>
            <person name="Tsudzuki T."/>
            <person name="Kadowaki K."/>
        </authorList>
    </citation>
    <scope>NUCLEOTIDE SEQUENCE [LARGE SCALE GENOMIC DNA]</scope>
    <source>
        <strain evidence="3">cv. SL10</strain>
    </source>
</reference>
<sequence length="225" mass="25216">MSLIEFPLLDQTSSNSVISTTLKDLSNWSRLSSLWPLLYGTSCCFIEFASLIGSRFDFDRYGLVPRSSPRQADLILTAGTVTMKMAPSLVRLYEQMPEPKYVIAMGACTITGGMFSTDSYSTVRGVDKLIPVDVYLPGCPPKPEAVIDALTKLRKKISREIVEDRTLSQKKNRCFTTSHKLYVRRSTNTGTYEQELLYQSPSTLDISSETFFKSKSPVSSYKLVN</sequence>
<organism>
    <name type="scientific">Oryza nivara</name>
    <name type="common">Indian wild rice</name>
    <name type="synonym">Oryza sativa f. spontanea</name>
    <dbReference type="NCBI Taxonomy" id="4536"/>
    <lineage>
        <taxon>Eukaryota</taxon>
        <taxon>Viridiplantae</taxon>
        <taxon>Streptophyta</taxon>
        <taxon>Embryophyta</taxon>
        <taxon>Tracheophyta</taxon>
        <taxon>Spermatophyta</taxon>
        <taxon>Magnoliopsida</taxon>
        <taxon>Liliopsida</taxon>
        <taxon>Poales</taxon>
        <taxon>Poaceae</taxon>
        <taxon>BOP clade</taxon>
        <taxon>Oryzoideae</taxon>
        <taxon>Oryzeae</taxon>
        <taxon>Oryzinae</taxon>
        <taxon>Oryza</taxon>
    </lineage>
</organism>
<accession>Q6ENH0</accession>
<feature type="chain" id="PRO_0000118751" description="NAD(P)H-quinone oxidoreductase subunit K, chloroplastic">
    <location>
        <begin position="1"/>
        <end position="225"/>
    </location>
</feature>
<feature type="binding site" evidence="1">
    <location>
        <position position="43"/>
    </location>
    <ligand>
        <name>[4Fe-4S] cluster</name>
        <dbReference type="ChEBI" id="CHEBI:49883"/>
    </ligand>
</feature>
<feature type="binding site" evidence="1">
    <location>
        <position position="44"/>
    </location>
    <ligand>
        <name>[4Fe-4S] cluster</name>
        <dbReference type="ChEBI" id="CHEBI:49883"/>
    </ligand>
</feature>
<feature type="binding site" evidence="1">
    <location>
        <position position="108"/>
    </location>
    <ligand>
        <name>[4Fe-4S] cluster</name>
        <dbReference type="ChEBI" id="CHEBI:49883"/>
    </ligand>
</feature>
<feature type="binding site" evidence="1">
    <location>
        <position position="139"/>
    </location>
    <ligand>
        <name>[4Fe-4S] cluster</name>
        <dbReference type="ChEBI" id="CHEBI:49883"/>
    </ligand>
</feature>
<keyword id="KW-0004">4Fe-4S</keyword>
<keyword id="KW-0150">Chloroplast</keyword>
<keyword id="KW-0408">Iron</keyword>
<keyword id="KW-0411">Iron-sulfur</keyword>
<keyword id="KW-0472">Membrane</keyword>
<keyword id="KW-0479">Metal-binding</keyword>
<keyword id="KW-0520">NAD</keyword>
<keyword id="KW-0521">NADP</keyword>
<keyword id="KW-0934">Plastid</keyword>
<keyword id="KW-0618">Plastoquinone</keyword>
<keyword id="KW-0874">Quinone</keyword>
<keyword id="KW-1185">Reference proteome</keyword>
<keyword id="KW-0793">Thylakoid</keyword>
<keyword id="KW-1278">Translocase</keyword>
<keyword id="KW-0813">Transport</keyword>
<evidence type="ECO:0000255" key="1">
    <source>
        <dbReference type="HAMAP-Rule" id="MF_01356"/>
    </source>
</evidence>
<evidence type="ECO:0000305" key="2"/>
<evidence type="ECO:0000312" key="3">
    <source>
        <dbReference type="Proteomes" id="UP000006591"/>
    </source>
</evidence>
<dbReference type="EC" id="7.1.1.-" evidence="1"/>
<dbReference type="EMBL" id="AP006728">
    <property type="protein sequence ID" value="BAD26782.1"/>
    <property type="status" value="ALT_INIT"/>
    <property type="molecule type" value="Genomic_DNA"/>
</dbReference>
<dbReference type="RefSeq" id="YP_052753.2">
    <property type="nucleotide sequence ID" value="NC_005973.1"/>
</dbReference>
<dbReference type="SMR" id="Q6ENH0"/>
<dbReference type="STRING" id="4536.Q6ENH0"/>
<dbReference type="GeneID" id="2885882"/>
<dbReference type="Proteomes" id="UP000006591">
    <property type="component" value="Chloroplast"/>
</dbReference>
<dbReference type="GO" id="GO:0009535">
    <property type="term" value="C:chloroplast thylakoid membrane"/>
    <property type="evidence" value="ECO:0007669"/>
    <property type="project" value="UniProtKB-SubCell"/>
</dbReference>
<dbReference type="GO" id="GO:0009536">
    <property type="term" value="C:plastid"/>
    <property type="evidence" value="ECO:0000305"/>
    <property type="project" value="Gramene"/>
</dbReference>
<dbReference type="GO" id="GO:0045271">
    <property type="term" value="C:respiratory chain complex I"/>
    <property type="evidence" value="ECO:0007669"/>
    <property type="project" value="TreeGrafter"/>
</dbReference>
<dbReference type="GO" id="GO:0051539">
    <property type="term" value="F:4 iron, 4 sulfur cluster binding"/>
    <property type="evidence" value="ECO:0007669"/>
    <property type="project" value="UniProtKB-KW"/>
</dbReference>
<dbReference type="GO" id="GO:0005506">
    <property type="term" value="F:iron ion binding"/>
    <property type="evidence" value="ECO:0007669"/>
    <property type="project" value="UniProtKB-UniRule"/>
</dbReference>
<dbReference type="GO" id="GO:0008137">
    <property type="term" value="F:NADH dehydrogenase (ubiquinone) activity"/>
    <property type="evidence" value="ECO:0007669"/>
    <property type="project" value="InterPro"/>
</dbReference>
<dbReference type="GO" id="GO:0048038">
    <property type="term" value="F:quinone binding"/>
    <property type="evidence" value="ECO:0007669"/>
    <property type="project" value="UniProtKB-KW"/>
</dbReference>
<dbReference type="GO" id="GO:0009060">
    <property type="term" value="P:aerobic respiration"/>
    <property type="evidence" value="ECO:0007669"/>
    <property type="project" value="TreeGrafter"/>
</dbReference>
<dbReference type="GO" id="GO:0015990">
    <property type="term" value="P:electron transport coupled proton transport"/>
    <property type="evidence" value="ECO:0007669"/>
    <property type="project" value="TreeGrafter"/>
</dbReference>
<dbReference type="GO" id="GO:0019684">
    <property type="term" value="P:photosynthesis, light reaction"/>
    <property type="evidence" value="ECO:0007669"/>
    <property type="project" value="UniProtKB-UniRule"/>
</dbReference>
<dbReference type="FunFam" id="3.40.50.12280:FF:000003">
    <property type="entry name" value="NAD(P)H-quinone oxidoreductase subunit K, chloroplastic"/>
    <property type="match status" value="1"/>
</dbReference>
<dbReference type="Gene3D" id="3.40.50.12280">
    <property type="match status" value="1"/>
</dbReference>
<dbReference type="HAMAP" id="MF_01356">
    <property type="entry name" value="NDH1_NuoB"/>
    <property type="match status" value="1"/>
</dbReference>
<dbReference type="InterPro" id="IPR006137">
    <property type="entry name" value="NADH_UbQ_OxRdtase-like_20kDa"/>
</dbReference>
<dbReference type="InterPro" id="IPR006138">
    <property type="entry name" value="NADH_UQ_OxRdtase_20Kd_su"/>
</dbReference>
<dbReference type="NCBIfam" id="TIGR01957">
    <property type="entry name" value="nuoB_fam"/>
    <property type="match status" value="1"/>
</dbReference>
<dbReference type="NCBIfam" id="NF005012">
    <property type="entry name" value="PRK06411.1"/>
    <property type="match status" value="1"/>
</dbReference>
<dbReference type="PANTHER" id="PTHR11995">
    <property type="entry name" value="NADH DEHYDROGENASE"/>
    <property type="match status" value="1"/>
</dbReference>
<dbReference type="PANTHER" id="PTHR11995:SF14">
    <property type="entry name" value="NADH DEHYDROGENASE [UBIQUINONE] IRON-SULFUR PROTEIN 7, MITOCHONDRIAL"/>
    <property type="match status" value="1"/>
</dbReference>
<dbReference type="Pfam" id="PF01058">
    <property type="entry name" value="Oxidored_q6"/>
    <property type="match status" value="1"/>
</dbReference>
<dbReference type="SUPFAM" id="SSF56770">
    <property type="entry name" value="HydA/Nqo6-like"/>
    <property type="match status" value="1"/>
</dbReference>
<dbReference type="PROSITE" id="PS01150">
    <property type="entry name" value="COMPLEX1_20K"/>
    <property type="match status" value="1"/>
</dbReference>
<proteinExistence type="inferred from homology"/>